<name>MNTP_ECO55</name>
<proteinExistence type="inferred from homology"/>
<comment type="function">
    <text evidence="1">Probably functions as a manganese efflux pump.</text>
</comment>
<comment type="subcellular location">
    <subcellularLocation>
        <location evidence="1">Cell inner membrane</location>
        <topology evidence="1">Multi-pass membrane protein</topology>
    </subcellularLocation>
</comment>
<comment type="similarity">
    <text evidence="1">Belongs to the MntP (TC 9.B.29) family.</text>
</comment>
<sequence>MNITATVLLAFGMSMDAFAASIGKGATLHKPKFSEALRTGLIFGAVETLTPLIGWGMGMLASRFVLEWNHWIAFVLLIFLGGRMIIEGFRGADDEDEEPRRRHGFWLLVTTAIATSLDAMAVGVGLAFLQVNIIATALAIGCATLIMSTLGMMVGRFIGSIIGKKAEILGGLVLIGIGVQILWTHFHG</sequence>
<accession>B7L6V0</accession>
<keyword id="KW-0997">Cell inner membrane</keyword>
<keyword id="KW-1003">Cell membrane</keyword>
<keyword id="KW-0406">Ion transport</keyword>
<keyword id="KW-0464">Manganese</keyword>
<keyword id="KW-0472">Membrane</keyword>
<keyword id="KW-1185">Reference proteome</keyword>
<keyword id="KW-0812">Transmembrane</keyword>
<keyword id="KW-1133">Transmembrane helix</keyword>
<keyword id="KW-0813">Transport</keyword>
<gene>
    <name evidence="1" type="primary">mntP</name>
    <name type="synonym">yebN</name>
    <name type="ordered locus">EC55989_1995</name>
</gene>
<reference key="1">
    <citation type="journal article" date="2009" name="PLoS Genet.">
        <title>Organised genome dynamics in the Escherichia coli species results in highly diverse adaptive paths.</title>
        <authorList>
            <person name="Touchon M."/>
            <person name="Hoede C."/>
            <person name="Tenaillon O."/>
            <person name="Barbe V."/>
            <person name="Baeriswyl S."/>
            <person name="Bidet P."/>
            <person name="Bingen E."/>
            <person name="Bonacorsi S."/>
            <person name="Bouchier C."/>
            <person name="Bouvet O."/>
            <person name="Calteau A."/>
            <person name="Chiapello H."/>
            <person name="Clermont O."/>
            <person name="Cruveiller S."/>
            <person name="Danchin A."/>
            <person name="Diard M."/>
            <person name="Dossat C."/>
            <person name="Karoui M.E."/>
            <person name="Frapy E."/>
            <person name="Garry L."/>
            <person name="Ghigo J.M."/>
            <person name="Gilles A.M."/>
            <person name="Johnson J."/>
            <person name="Le Bouguenec C."/>
            <person name="Lescat M."/>
            <person name="Mangenot S."/>
            <person name="Martinez-Jehanne V."/>
            <person name="Matic I."/>
            <person name="Nassif X."/>
            <person name="Oztas S."/>
            <person name="Petit M.A."/>
            <person name="Pichon C."/>
            <person name="Rouy Z."/>
            <person name="Ruf C.S."/>
            <person name="Schneider D."/>
            <person name="Tourret J."/>
            <person name="Vacherie B."/>
            <person name="Vallenet D."/>
            <person name="Medigue C."/>
            <person name="Rocha E.P.C."/>
            <person name="Denamur E."/>
        </authorList>
    </citation>
    <scope>NUCLEOTIDE SEQUENCE [LARGE SCALE GENOMIC DNA]</scope>
    <source>
        <strain>55989 / EAEC</strain>
    </source>
</reference>
<dbReference type="EMBL" id="CU928145">
    <property type="protein sequence ID" value="CAU97853.1"/>
    <property type="molecule type" value="Genomic_DNA"/>
</dbReference>
<dbReference type="RefSeq" id="WP_001296134.1">
    <property type="nucleotide sequence ID" value="NZ_CP028304.1"/>
</dbReference>
<dbReference type="GeneID" id="93776070"/>
<dbReference type="KEGG" id="eck:EC55989_1995"/>
<dbReference type="HOGENOM" id="CLU_096410_0_0_6"/>
<dbReference type="Proteomes" id="UP000000746">
    <property type="component" value="Chromosome"/>
</dbReference>
<dbReference type="GO" id="GO:0005886">
    <property type="term" value="C:plasma membrane"/>
    <property type="evidence" value="ECO:0007669"/>
    <property type="project" value="UniProtKB-SubCell"/>
</dbReference>
<dbReference type="GO" id="GO:0005384">
    <property type="term" value="F:manganese ion transmembrane transporter activity"/>
    <property type="evidence" value="ECO:0007669"/>
    <property type="project" value="UniProtKB-UniRule"/>
</dbReference>
<dbReference type="HAMAP" id="MF_01521">
    <property type="entry name" value="MntP_pump"/>
    <property type="match status" value="1"/>
</dbReference>
<dbReference type="InterPro" id="IPR003810">
    <property type="entry name" value="Mntp/YtaF"/>
</dbReference>
<dbReference type="InterPro" id="IPR022929">
    <property type="entry name" value="Put_MntP"/>
</dbReference>
<dbReference type="NCBIfam" id="NF008546">
    <property type="entry name" value="PRK11469.1"/>
    <property type="match status" value="1"/>
</dbReference>
<dbReference type="PANTHER" id="PTHR35529">
    <property type="entry name" value="MANGANESE EFFLUX PUMP MNTP-RELATED"/>
    <property type="match status" value="1"/>
</dbReference>
<dbReference type="PANTHER" id="PTHR35529:SF1">
    <property type="entry name" value="MANGANESE EFFLUX PUMP MNTP-RELATED"/>
    <property type="match status" value="1"/>
</dbReference>
<dbReference type="Pfam" id="PF02659">
    <property type="entry name" value="Mntp"/>
    <property type="match status" value="1"/>
</dbReference>
<feature type="chain" id="PRO_1000185109" description="Probable manganese efflux pump MntP">
    <location>
        <begin position="1"/>
        <end position="188"/>
    </location>
</feature>
<feature type="transmembrane region" description="Helical" evidence="1">
    <location>
        <begin position="3"/>
        <end position="23"/>
    </location>
</feature>
<feature type="transmembrane region" description="Helical" evidence="1">
    <location>
        <begin position="66"/>
        <end position="86"/>
    </location>
</feature>
<feature type="transmembrane region" description="Helical" evidence="1">
    <location>
        <begin position="106"/>
        <end position="128"/>
    </location>
</feature>
<feature type="transmembrane region" description="Helical" evidence="1">
    <location>
        <begin position="143"/>
        <end position="163"/>
    </location>
</feature>
<feature type="transmembrane region" description="Helical" evidence="1">
    <location>
        <begin position="168"/>
        <end position="188"/>
    </location>
</feature>
<organism>
    <name type="scientific">Escherichia coli (strain 55989 / EAEC)</name>
    <dbReference type="NCBI Taxonomy" id="585055"/>
    <lineage>
        <taxon>Bacteria</taxon>
        <taxon>Pseudomonadati</taxon>
        <taxon>Pseudomonadota</taxon>
        <taxon>Gammaproteobacteria</taxon>
        <taxon>Enterobacterales</taxon>
        <taxon>Enterobacteriaceae</taxon>
        <taxon>Escherichia</taxon>
    </lineage>
</organism>
<protein>
    <recommendedName>
        <fullName evidence="1">Probable manganese efflux pump MntP</fullName>
    </recommendedName>
</protein>
<evidence type="ECO:0000255" key="1">
    <source>
        <dbReference type="HAMAP-Rule" id="MF_01521"/>
    </source>
</evidence>